<evidence type="ECO:0000255" key="1">
    <source>
        <dbReference type="HAMAP-Rule" id="MF_00396"/>
    </source>
</evidence>
<feature type="chain" id="PRO_1000192348" description="Cytochrome b6-f complex subunit 7">
    <location>
        <begin position="1"/>
        <end position="37"/>
    </location>
</feature>
<feature type="transmembrane region" description="Helical" evidence="1">
    <location>
        <begin position="11"/>
        <end position="29"/>
    </location>
</feature>
<organism>
    <name type="scientific">Gloeothece citriformis (strain PCC 7424)</name>
    <name type="common">Cyanothece sp. (strain PCC 7424)</name>
    <dbReference type="NCBI Taxonomy" id="65393"/>
    <lineage>
        <taxon>Bacteria</taxon>
        <taxon>Bacillati</taxon>
        <taxon>Cyanobacteriota</taxon>
        <taxon>Cyanophyceae</taxon>
        <taxon>Oscillatoriophycideae</taxon>
        <taxon>Chroococcales</taxon>
        <taxon>Aphanothecaceae</taxon>
        <taxon>Gloeothece</taxon>
        <taxon>Gloeothece citriformis</taxon>
    </lineage>
</organism>
<protein>
    <recommendedName>
        <fullName evidence="1">Cytochrome b6-f complex subunit 7</fullName>
    </recommendedName>
    <alternativeName>
        <fullName evidence="1">Cytochrome b6-f complex subunit PetM</fullName>
    </alternativeName>
    <alternativeName>
        <fullName evidence="1">Cytochrome b6-f complex subunit VII</fullName>
    </alternativeName>
</protein>
<name>PETM_GLOC7</name>
<dbReference type="EMBL" id="CP001291">
    <property type="protein sequence ID" value="ACK72881.1"/>
    <property type="molecule type" value="Genomic_DNA"/>
</dbReference>
<dbReference type="RefSeq" id="WP_013320355.1">
    <property type="nucleotide sequence ID" value="NC_011729.1"/>
</dbReference>
<dbReference type="SMR" id="B7KAA7"/>
<dbReference type="STRING" id="65393.PCC7424_4518"/>
<dbReference type="KEGG" id="cyc:PCC7424_4518"/>
<dbReference type="eggNOG" id="ENOG5033D32">
    <property type="taxonomic scope" value="Bacteria"/>
</dbReference>
<dbReference type="HOGENOM" id="CLU_216743_0_0_3"/>
<dbReference type="OrthoDB" id="560408at2"/>
<dbReference type="Proteomes" id="UP000002384">
    <property type="component" value="Chromosome"/>
</dbReference>
<dbReference type="GO" id="GO:0009512">
    <property type="term" value="C:cytochrome b6f complex"/>
    <property type="evidence" value="ECO:0007669"/>
    <property type="project" value="InterPro"/>
</dbReference>
<dbReference type="GO" id="GO:0031676">
    <property type="term" value="C:plasma membrane-derived thylakoid membrane"/>
    <property type="evidence" value="ECO:0007669"/>
    <property type="project" value="UniProtKB-SubCell"/>
</dbReference>
<dbReference type="GO" id="GO:0009055">
    <property type="term" value="F:electron transfer activity"/>
    <property type="evidence" value="ECO:0007669"/>
    <property type="project" value="UniProtKB-UniRule"/>
</dbReference>
<dbReference type="GO" id="GO:0015979">
    <property type="term" value="P:photosynthesis"/>
    <property type="evidence" value="ECO:0007669"/>
    <property type="project" value="UniProtKB-KW"/>
</dbReference>
<dbReference type="HAMAP" id="MF_00396">
    <property type="entry name" value="Cytb6_f_PetM"/>
    <property type="match status" value="1"/>
</dbReference>
<dbReference type="InterPro" id="IPR012595">
    <property type="entry name" value="PetM_cyt_b6/f_cplx_su7"/>
</dbReference>
<dbReference type="Pfam" id="PF08041">
    <property type="entry name" value="PetM"/>
    <property type="match status" value="1"/>
</dbReference>
<dbReference type="SUPFAM" id="SSF103441">
    <property type="entry name" value="PetM subunit of the cytochrome b6f complex"/>
    <property type="match status" value="1"/>
</dbReference>
<accession>B7KAA7</accession>
<gene>
    <name evidence="1" type="primary">petM</name>
    <name type="ordered locus">PCC7424_4518</name>
</gene>
<sequence>MTAESMLFNGAILSIVLVLVGLAWGFLLLKIQGGEAE</sequence>
<comment type="function">
    <text evidence="1">Component of the cytochrome b6-f complex, which mediates electron transfer between photosystem II (PSII) and photosystem I (PSI), cyclic electron flow around PSI, and state transitions.</text>
</comment>
<comment type="subunit">
    <text evidence="1">The 4 large subunits of the cytochrome b6-f complex are cytochrome b6, subunit IV (17 kDa polypeptide, PetD), cytochrome f and the Rieske protein, while the 4 small subunits are PetG, PetL, PetM and PetN. The complex functions as a dimer.</text>
</comment>
<comment type="subcellular location">
    <subcellularLocation>
        <location evidence="1">Cellular thylakoid membrane</location>
        <topology evidence="1">Single-pass membrane protein</topology>
    </subcellularLocation>
</comment>
<comment type="similarity">
    <text evidence="1">Belongs to the PetM family.</text>
</comment>
<keyword id="KW-0249">Electron transport</keyword>
<keyword id="KW-0472">Membrane</keyword>
<keyword id="KW-0602">Photosynthesis</keyword>
<keyword id="KW-1185">Reference proteome</keyword>
<keyword id="KW-0793">Thylakoid</keyword>
<keyword id="KW-0812">Transmembrane</keyword>
<keyword id="KW-1133">Transmembrane helix</keyword>
<keyword id="KW-0813">Transport</keyword>
<proteinExistence type="inferred from homology"/>
<reference key="1">
    <citation type="journal article" date="2011" name="MBio">
        <title>Novel metabolic attributes of the genus Cyanothece, comprising a group of unicellular nitrogen-fixing Cyanobacteria.</title>
        <authorList>
            <person name="Bandyopadhyay A."/>
            <person name="Elvitigala T."/>
            <person name="Welsh E."/>
            <person name="Stockel J."/>
            <person name="Liberton M."/>
            <person name="Min H."/>
            <person name="Sherman L.A."/>
            <person name="Pakrasi H.B."/>
        </authorList>
    </citation>
    <scope>NUCLEOTIDE SEQUENCE [LARGE SCALE GENOMIC DNA]</scope>
    <source>
        <strain>PCC 7424</strain>
    </source>
</reference>